<keyword id="KW-0002">3D-structure</keyword>
<keyword id="KW-0025">Alternative splicing</keyword>
<keyword id="KW-0210">Decarboxylase</keyword>
<keyword id="KW-0456">Lyase</keyword>
<keyword id="KW-0663">Pyridoxal phosphate</keyword>
<keyword id="KW-1185">Reference proteome</keyword>
<sequence>MSHARDDHQGASQGSQWLSQARTLVQEGTLFNFIRCLLLFQGDSGQKEMTPGKKIPIFVDGVVLNGPQTDVKAGEKFVEEACRLIMEEVVLKATDVNEKVCEWQPPEQLRQLLDLEMRDTGESQDKLLKLCQDVIHFSVKTNHPRFFNQLYAGLDYYSLAARIITEALNPSIYTYEVSPVFLLVEEAVLKKMIECVGWKEGDGIFNPGGSVSNMCAMNLARYRHCPDIKEKGLSGLPRLILFTSAECHYSMKKAASFLGIGTQNVYFVETDGRGKMIPEDLEKQIWQARQEGAVPFLVCATSGTTVLGAFDPLDEIAEVCERHGLWLHVDASWGGSALVSRKHRRLLHGIHRADSVAWNPHKMLMAGIQCSALLVKDKSDLLKKCYSAKATYLFQQDKFYDVSYDTGDKSIQCSRRPDAFKFWMTWKALGTSGLEERVNRAFALSRYLVDEIKKREGFKLLMEPEYTNVCFWYIPPSLREMEEGPEFWRKLSLVAPAIKEKMMKKGSLMLGYQPHRGKVNFFRQVVISPQVSREDMDFLLDEIDSLGRDM</sequence>
<proteinExistence type="evidence at protein level"/>
<name>GADL1_MOUSE</name>
<accession>Q80WP8</accession>
<accession>Q9CTD2</accession>
<feature type="chain" id="PRO_0000312225" description="Acidic amino acid decarboxylase GADL1">
    <location>
        <begin position="1"/>
        <end position="550"/>
    </location>
</feature>
<feature type="modified residue" description="N6-(pyridoxal phosphate)lysine" evidence="3 8">
    <location>
        <position position="362"/>
    </location>
</feature>
<feature type="splice variant" id="VSP_029752" description="In isoform 2." evidence="4">
    <original>VAPAIKEKMMKKGSLMLGYQPHRGKVNFFRQVVISPQVSREDMDFLLDEIDSLGRDM</original>
    <variation>RTVQFICRGFLLERNADSHFALRNWKTFPSVLA</variation>
    <location>
        <begin position="494"/>
        <end position="550"/>
    </location>
</feature>
<feature type="sequence conflict" description="In Ref. 3; BAB23083." evidence="7" ref="3">
    <original>R</original>
    <variation>K</variation>
    <location>
        <position position="341"/>
    </location>
</feature>
<feature type="helix" evidence="9">
    <location>
        <begin position="71"/>
        <end position="88"/>
    </location>
</feature>
<feature type="turn" evidence="9">
    <location>
        <begin position="89"/>
        <end position="94"/>
    </location>
</feature>
<feature type="helix" evidence="9">
    <location>
        <begin position="106"/>
        <end position="113"/>
    </location>
</feature>
<feature type="helix" evidence="9">
    <location>
        <begin position="124"/>
        <end position="137"/>
    </location>
</feature>
<feature type="strand" evidence="9">
    <location>
        <begin position="146"/>
        <end position="150"/>
    </location>
</feature>
<feature type="helix" evidence="9">
    <location>
        <begin position="156"/>
        <end position="168"/>
    </location>
</feature>
<feature type="turn" evidence="9">
    <location>
        <begin position="175"/>
        <end position="177"/>
    </location>
</feature>
<feature type="helix" evidence="9">
    <location>
        <begin position="179"/>
        <end position="196"/>
    </location>
</feature>
<feature type="strand" evidence="9">
    <location>
        <begin position="202"/>
        <end position="208"/>
    </location>
</feature>
<feature type="helix" evidence="9">
    <location>
        <begin position="209"/>
        <end position="224"/>
    </location>
</feature>
<feature type="helix" evidence="9">
    <location>
        <begin position="228"/>
        <end position="231"/>
    </location>
</feature>
<feature type="strand" evidence="9">
    <location>
        <begin position="239"/>
        <end position="244"/>
    </location>
</feature>
<feature type="helix" evidence="9">
    <location>
        <begin position="250"/>
        <end position="257"/>
    </location>
</feature>
<feature type="helix" evidence="9">
    <location>
        <begin position="262"/>
        <end position="264"/>
    </location>
</feature>
<feature type="strand" evidence="9">
    <location>
        <begin position="265"/>
        <end position="268"/>
    </location>
</feature>
<feature type="helix" evidence="9">
    <location>
        <begin position="278"/>
        <end position="290"/>
    </location>
</feature>
<feature type="strand" evidence="9">
    <location>
        <begin position="294"/>
        <end position="303"/>
    </location>
</feature>
<feature type="strand" evidence="9">
    <location>
        <begin position="305"/>
        <end position="307"/>
    </location>
</feature>
<feature type="helix" evidence="9">
    <location>
        <begin position="313"/>
        <end position="323"/>
    </location>
</feature>
<feature type="strand" evidence="9">
    <location>
        <begin position="326"/>
        <end position="330"/>
    </location>
</feature>
<feature type="helix" evidence="9">
    <location>
        <begin position="334"/>
        <end position="339"/>
    </location>
</feature>
<feature type="turn" evidence="9">
    <location>
        <begin position="341"/>
        <end position="343"/>
    </location>
</feature>
<feature type="helix" evidence="9">
    <location>
        <begin position="344"/>
        <end position="347"/>
    </location>
</feature>
<feature type="helix" evidence="9">
    <location>
        <begin position="350"/>
        <end position="352"/>
    </location>
</feature>
<feature type="strand" evidence="9">
    <location>
        <begin position="353"/>
        <end position="358"/>
    </location>
</feature>
<feature type="helix" evidence="9">
    <location>
        <begin position="360"/>
        <end position="363"/>
    </location>
</feature>
<feature type="strand" evidence="9">
    <location>
        <begin position="371"/>
        <end position="376"/>
    </location>
</feature>
<feature type="helix" evidence="9">
    <location>
        <begin position="381"/>
        <end position="386"/>
    </location>
</feature>
<feature type="helix" evidence="9">
    <location>
        <begin position="402"/>
        <end position="404"/>
    </location>
</feature>
<feature type="turn" evidence="9">
    <location>
        <begin position="407"/>
        <end position="409"/>
    </location>
</feature>
<feature type="helix" evidence="9">
    <location>
        <begin position="418"/>
        <end position="454"/>
    </location>
</feature>
<feature type="strand" evidence="9">
    <location>
        <begin position="455"/>
        <end position="462"/>
    </location>
</feature>
<feature type="strand" evidence="9">
    <location>
        <begin position="465"/>
        <end position="473"/>
    </location>
</feature>
<feature type="helix" evidence="9">
    <location>
        <begin position="476"/>
        <end position="478"/>
    </location>
</feature>
<feature type="helix" evidence="9">
    <location>
        <begin position="485"/>
        <end position="491"/>
    </location>
</feature>
<feature type="helix" evidence="9">
    <location>
        <begin position="494"/>
        <end position="505"/>
    </location>
</feature>
<feature type="strand" evidence="9">
    <location>
        <begin position="509"/>
        <end position="515"/>
    </location>
</feature>
<feature type="strand" evidence="9">
    <location>
        <begin position="518"/>
        <end position="525"/>
    </location>
</feature>
<feature type="helix" evidence="9">
    <location>
        <begin position="533"/>
        <end position="547"/>
    </location>
</feature>
<dbReference type="EC" id="4.1.1.11" evidence="2"/>
<dbReference type="EC" id="4.1.1.29" evidence="2"/>
<dbReference type="EMBL" id="AC133169">
    <property type="status" value="NOT_ANNOTATED_CDS"/>
    <property type="molecule type" value="Genomic_DNA"/>
</dbReference>
<dbReference type="EMBL" id="AC131777">
    <property type="status" value="NOT_ANNOTATED_CDS"/>
    <property type="molecule type" value="Genomic_DNA"/>
</dbReference>
<dbReference type="EMBL" id="AC167467">
    <property type="status" value="NOT_ANNOTATED_CDS"/>
    <property type="molecule type" value="Genomic_DNA"/>
</dbReference>
<dbReference type="EMBL" id="BC052327">
    <property type="protein sequence ID" value="AAH52327.1"/>
    <property type="molecule type" value="mRNA"/>
</dbReference>
<dbReference type="EMBL" id="AK003937">
    <property type="protein sequence ID" value="BAB23083.1"/>
    <property type="molecule type" value="mRNA"/>
</dbReference>
<dbReference type="RefSeq" id="NP_082914.1">
    <property type="nucleotide sequence ID" value="NM_028638.1"/>
</dbReference>
<dbReference type="PDB" id="6ENZ">
    <property type="method" value="Other"/>
    <property type="resolution" value="3.00 A"/>
    <property type="chains" value="A/B=49-550"/>
</dbReference>
<dbReference type="PDBsum" id="6ENZ"/>
<dbReference type="SMR" id="Q80WP8"/>
<dbReference type="BioGRID" id="216228">
    <property type="interactions" value="1"/>
</dbReference>
<dbReference type="FunCoup" id="Q80WP8">
    <property type="interactions" value="354"/>
</dbReference>
<dbReference type="IntAct" id="Q80WP8">
    <property type="interactions" value="1"/>
</dbReference>
<dbReference type="STRING" id="10090.ENSMUSP00000077694"/>
<dbReference type="iPTMnet" id="Q80WP8"/>
<dbReference type="PhosphoSitePlus" id="Q80WP8"/>
<dbReference type="jPOST" id="Q80WP8"/>
<dbReference type="PaxDb" id="10090-ENSMUSP00000077694"/>
<dbReference type="ProteomicsDB" id="273022">
    <molecule id="Q80WP8-1"/>
</dbReference>
<dbReference type="ProteomicsDB" id="273023">
    <molecule id="Q80WP8-2"/>
</dbReference>
<dbReference type="GeneID" id="73748"/>
<dbReference type="KEGG" id="mmu:73748"/>
<dbReference type="UCSC" id="uc009ryr.2">
    <molecule id="Q80WP8-1"/>
    <property type="organism name" value="mouse"/>
</dbReference>
<dbReference type="AGR" id="MGI:1920998"/>
<dbReference type="CTD" id="339896"/>
<dbReference type="MGI" id="MGI:1920998">
    <property type="gene designation" value="Gadl1"/>
</dbReference>
<dbReference type="eggNOG" id="KOG0629">
    <property type="taxonomic scope" value="Eukaryota"/>
</dbReference>
<dbReference type="InParanoid" id="Q80WP8"/>
<dbReference type="PhylomeDB" id="Q80WP8"/>
<dbReference type="Reactome" id="R-MMU-1614558">
    <property type="pathway name" value="Degradation of cysteine and homocysteine"/>
</dbReference>
<dbReference type="Reactome" id="R-MMU-8963693">
    <property type="pathway name" value="Aspartate and asparagine metabolism"/>
</dbReference>
<dbReference type="BioGRID-ORCS" id="73748">
    <property type="hits" value="1 hit in 79 CRISPR screens"/>
</dbReference>
<dbReference type="ChiTaRS" id="Gadl1">
    <property type="organism name" value="mouse"/>
</dbReference>
<dbReference type="PRO" id="PR:Q80WP8"/>
<dbReference type="Proteomes" id="UP000000589">
    <property type="component" value="Unplaced"/>
</dbReference>
<dbReference type="RNAct" id="Q80WP8">
    <property type="molecule type" value="protein"/>
</dbReference>
<dbReference type="GO" id="GO:0004068">
    <property type="term" value="F:aspartate 1-decarboxylase activity"/>
    <property type="evidence" value="ECO:0007669"/>
    <property type="project" value="UniProtKB-EC"/>
</dbReference>
<dbReference type="GO" id="GO:0030170">
    <property type="term" value="F:pyridoxal phosphate binding"/>
    <property type="evidence" value="ECO:0007669"/>
    <property type="project" value="InterPro"/>
</dbReference>
<dbReference type="GO" id="GO:0004782">
    <property type="term" value="F:sulfinoalanine decarboxylase activity"/>
    <property type="evidence" value="ECO:0007669"/>
    <property type="project" value="UniProtKB-EC"/>
</dbReference>
<dbReference type="GO" id="GO:0019752">
    <property type="term" value="P:carboxylic acid metabolic process"/>
    <property type="evidence" value="ECO:0007669"/>
    <property type="project" value="InterPro"/>
</dbReference>
<dbReference type="CDD" id="cd06450">
    <property type="entry name" value="DOPA_deC_like"/>
    <property type="match status" value="1"/>
</dbReference>
<dbReference type="FunFam" id="3.40.640.10:FF:000016">
    <property type="entry name" value="Glutamate decarboxylase like 1"/>
    <property type="match status" value="1"/>
</dbReference>
<dbReference type="Gene3D" id="3.90.1150.170">
    <property type="match status" value="1"/>
</dbReference>
<dbReference type="Gene3D" id="3.40.640.10">
    <property type="entry name" value="Type I PLP-dependent aspartate aminotransferase-like (Major domain)"/>
    <property type="match status" value="1"/>
</dbReference>
<dbReference type="InterPro" id="IPR002129">
    <property type="entry name" value="PyrdxlP-dep_de-COase"/>
</dbReference>
<dbReference type="InterPro" id="IPR015424">
    <property type="entry name" value="PyrdxlP-dep_Trfase"/>
</dbReference>
<dbReference type="InterPro" id="IPR015421">
    <property type="entry name" value="PyrdxlP-dep_Trfase_major"/>
</dbReference>
<dbReference type="InterPro" id="IPR021115">
    <property type="entry name" value="Pyridoxal-P_BS"/>
</dbReference>
<dbReference type="PANTHER" id="PTHR45677:SF1">
    <property type="entry name" value="ACIDIC AMINO ACID DECARBOXYLASE GADL1"/>
    <property type="match status" value="1"/>
</dbReference>
<dbReference type="PANTHER" id="PTHR45677">
    <property type="entry name" value="GLUTAMATE DECARBOXYLASE-RELATED"/>
    <property type="match status" value="1"/>
</dbReference>
<dbReference type="Pfam" id="PF00282">
    <property type="entry name" value="Pyridoxal_deC"/>
    <property type="match status" value="1"/>
</dbReference>
<dbReference type="SUPFAM" id="SSF53383">
    <property type="entry name" value="PLP-dependent transferases"/>
    <property type="match status" value="1"/>
</dbReference>
<dbReference type="PROSITE" id="PS00392">
    <property type="entry name" value="DDC_GAD_HDC_YDC"/>
    <property type="match status" value="1"/>
</dbReference>
<gene>
    <name evidence="5" type="primary">Gadl1</name>
</gene>
<evidence type="ECO:0000269" key="1">
    <source>
    </source>
</evidence>
<evidence type="ECO:0000269" key="2">
    <source>
    </source>
</evidence>
<evidence type="ECO:0000269" key="3">
    <source>
    </source>
</evidence>
<evidence type="ECO:0000303" key="4">
    <source>
    </source>
</evidence>
<evidence type="ECO:0000303" key="5">
    <source>
    </source>
</evidence>
<evidence type="ECO:0000303" key="6">
    <source>
    </source>
</evidence>
<evidence type="ECO:0000305" key="7"/>
<evidence type="ECO:0007744" key="8">
    <source>
        <dbReference type="PDB" id="6ENZ"/>
    </source>
</evidence>
<evidence type="ECO:0007829" key="9">
    <source>
        <dbReference type="PDB" id="6ENZ"/>
    </source>
</evidence>
<protein>
    <recommendedName>
        <fullName evidence="6">Acidic amino acid decarboxylase GADL1</fullName>
    </recommendedName>
    <alternativeName>
        <fullName>Aspartate 1-decarboxylase</fullName>
        <shortName>ADC</shortName>
        <ecNumber evidence="2">4.1.1.11</ecNumber>
    </alternativeName>
    <alternativeName>
        <fullName>Cysteine sulfinic acid decarboxylase</fullName>
        <shortName>CSADC</shortName>
        <ecNumber evidence="2">4.1.1.29</ecNumber>
    </alternativeName>
    <alternativeName>
        <fullName evidence="5">Glutamate decarboxylase-like protein 1</fullName>
    </alternativeName>
</protein>
<organism>
    <name type="scientific">Mus musculus</name>
    <name type="common">Mouse</name>
    <dbReference type="NCBI Taxonomy" id="10090"/>
    <lineage>
        <taxon>Eukaryota</taxon>
        <taxon>Metazoa</taxon>
        <taxon>Chordata</taxon>
        <taxon>Craniata</taxon>
        <taxon>Vertebrata</taxon>
        <taxon>Euteleostomi</taxon>
        <taxon>Mammalia</taxon>
        <taxon>Eutheria</taxon>
        <taxon>Euarchontoglires</taxon>
        <taxon>Glires</taxon>
        <taxon>Rodentia</taxon>
        <taxon>Myomorpha</taxon>
        <taxon>Muroidea</taxon>
        <taxon>Muridae</taxon>
        <taxon>Murinae</taxon>
        <taxon>Mus</taxon>
        <taxon>Mus</taxon>
    </lineage>
</organism>
<comment type="function">
    <text evidence="2">Catalyzes the decarboxylation of L-aspartate, 3-sulfino-L-alanine (cysteine sulfinic acid), and L-cysteate to beta-alanine, hypotaurine and taurine, respectively. The preferred substrate is L-aspartate. Does not exhibit any decarboxylation activity toward glutamate.</text>
</comment>
<comment type="catalytic activity">
    <reaction evidence="2">
        <text>L-aspartate + H(+) = beta-alanine + CO2</text>
        <dbReference type="Rhea" id="RHEA:19497"/>
        <dbReference type="ChEBI" id="CHEBI:15378"/>
        <dbReference type="ChEBI" id="CHEBI:16526"/>
        <dbReference type="ChEBI" id="CHEBI:29991"/>
        <dbReference type="ChEBI" id="CHEBI:57966"/>
        <dbReference type="EC" id="4.1.1.11"/>
    </reaction>
</comment>
<comment type="catalytic activity">
    <reaction evidence="2">
        <text>3-sulfino-L-alanine + H(+) = hypotaurine + CO2</text>
        <dbReference type="Rhea" id="RHEA:16877"/>
        <dbReference type="ChEBI" id="CHEBI:15378"/>
        <dbReference type="ChEBI" id="CHEBI:16526"/>
        <dbReference type="ChEBI" id="CHEBI:57853"/>
        <dbReference type="ChEBI" id="CHEBI:61085"/>
        <dbReference type="EC" id="4.1.1.29"/>
    </reaction>
</comment>
<comment type="catalytic activity">
    <reaction evidence="2">
        <text>L-cysteate + H(+) = taurine + CO2</text>
        <dbReference type="Rhea" id="RHEA:25221"/>
        <dbReference type="ChEBI" id="CHEBI:15378"/>
        <dbReference type="ChEBI" id="CHEBI:16526"/>
        <dbReference type="ChEBI" id="CHEBI:58090"/>
        <dbReference type="ChEBI" id="CHEBI:507393"/>
        <dbReference type="EC" id="4.1.1.29"/>
    </reaction>
</comment>
<comment type="cofactor">
    <cofactor evidence="3">
        <name>pyridoxal 5'-phosphate</name>
        <dbReference type="ChEBI" id="CHEBI:597326"/>
    </cofactor>
</comment>
<comment type="activity regulation">
    <text evidence="2">Activated weakly by 0.2-0.4 mM Li(+). Inhibited by bis-carboxymethyl-trithiocarbonate, ethylxanthogenacetic acid and 2,5-disulfoaniline.</text>
</comment>
<comment type="biophysicochemical properties">
    <kinetics>
        <KM evidence="2">1.12 mM for 3-sulfino-L-alanine (cysteine sulfinic acid)</KM>
        <KM evidence="2">31.7 mM for L-aspartate</KM>
        <Vmax evidence="2">3.84 umol/min/mg enzyme with 3-sulfino-L-alanine (cysteine sulfinic acid) as substrate</Vmax>
        <Vmax evidence="2">1.41 umol/min/mg enzyme with L-aspartate as substrate</Vmax>
        <text evidence="2">kcat is 3.6 sec(-1) with 3-sulfino-L-alanine (cysteine sulfinic acid) as substrate. kcat 1.3 sec(-1) is with L-aspartate as substrate.</text>
    </kinetics>
</comment>
<comment type="subunit">
    <text evidence="2 3">Homodimer.</text>
</comment>
<comment type="alternative products">
    <event type="alternative splicing"/>
    <isoform>
        <id>Q80WP8-1</id>
        <name>1</name>
        <sequence type="displayed"/>
    </isoform>
    <isoform>
        <id>Q80WP8-2</id>
        <name>2</name>
        <sequence type="described" ref="VSP_029752"/>
    </isoform>
</comment>
<comment type="tissue specificity">
    <text evidence="1 2">Expressed in skeletal muscles and kidney (at protein level). Expressed in skeletal muscle and weakly in brain. Not expressed in liver or kidney. Expressed in brain, olfactory bulb, liver, muscle and kidney with the highest expression in olfactory bulb and almost not detected in liver (at protein level) (PubMed:26327310).</text>
</comment>
<comment type="developmental stage">
    <text evidence="2">Expression in total brain lysate is weak but seems to decrease with age as detected from 17 dpc to 12 months.</text>
</comment>
<comment type="similarity">
    <text evidence="7">Belongs to the group II decarboxylase family.</text>
</comment>
<reference key="1">
    <citation type="journal article" date="2009" name="PLoS Biol.">
        <title>Lineage-specific biology revealed by a finished genome assembly of the mouse.</title>
        <authorList>
            <person name="Church D.M."/>
            <person name="Goodstadt L."/>
            <person name="Hillier L.W."/>
            <person name="Zody M.C."/>
            <person name="Goldstein S."/>
            <person name="She X."/>
            <person name="Bult C.J."/>
            <person name="Agarwala R."/>
            <person name="Cherry J.L."/>
            <person name="DiCuccio M."/>
            <person name="Hlavina W."/>
            <person name="Kapustin Y."/>
            <person name="Meric P."/>
            <person name="Maglott D."/>
            <person name="Birtle Z."/>
            <person name="Marques A.C."/>
            <person name="Graves T."/>
            <person name="Zhou S."/>
            <person name="Teague B."/>
            <person name="Potamousis K."/>
            <person name="Churas C."/>
            <person name="Place M."/>
            <person name="Herschleb J."/>
            <person name="Runnheim R."/>
            <person name="Forrest D."/>
            <person name="Amos-Landgraf J."/>
            <person name="Schwartz D.C."/>
            <person name="Cheng Z."/>
            <person name="Lindblad-Toh K."/>
            <person name="Eichler E.E."/>
            <person name="Ponting C.P."/>
        </authorList>
    </citation>
    <scope>NUCLEOTIDE SEQUENCE [LARGE SCALE GENOMIC DNA]</scope>
    <source>
        <strain>C57BL/6J</strain>
    </source>
</reference>
<reference key="2">
    <citation type="journal article" date="2004" name="Genome Res.">
        <title>The status, quality, and expansion of the NIH full-length cDNA project: the Mammalian Gene Collection (MGC).</title>
        <authorList>
            <consortium name="The MGC Project Team"/>
        </authorList>
    </citation>
    <scope>NUCLEOTIDE SEQUENCE [LARGE SCALE MRNA] OF 23-550 (ISOFORM 2)</scope>
    <source>
        <tissue>Olfactory epithelium</tissue>
    </source>
</reference>
<reference key="3">
    <citation type="journal article" date="2005" name="Science">
        <title>The transcriptional landscape of the mammalian genome.</title>
        <authorList>
            <person name="Carninci P."/>
            <person name="Kasukawa T."/>
            <person name="Katayama S."/>
            <person name="Gough J."/>
            <person name="Frith M.C."/>
            <person name="Maeda N."/>
            <person name="Oyama R."/>
            <person name="Ravasi T."/>
            <person name="Lenhard B."/>
            <person name="Wells C."/>
            <person name="Kodzius R."/>
            <person name="Shimokawa K."/>
            <person name="Bajic V.B."/>
            <person name="Brenner S.E."/>
            <person name="Batalov S."/>
            <person name="Forrest A.R."/>
            <person name="Zavolan M."/>
            <person name="Davis M.J."/>
            <person name="Wilming L.G."/>
            <person name="Aidinis V."/>
            <person name="Allen J.E."/>
            <person name="Ambesi-Impiombato A."/>
            <person name="Apweiler R."/>
            <person name="Aturaliya R.N."/>
            <person name="Bailey T.L."/>
            <person name="Bansal M."/>
            <person name="Baxter L."/>
            <person name="Beisel K.W."/>
            <person name="Bersano T."/>
            <person name="Bono H."/>
            <person name="Chalk A.M."/>
            <person name="Chiu K.P."/>
            <person name="Choudhary V."/>
            <person name="Christoffels A."/>
            <person name="Clutterbuck D.R."/>
            <person name="Crowe M.L."/>
            <person name="Dalla E."/>
            <person name="Dalrymple B.P."/>
            <person name="de Bono B."/>
            <person name="Della Gatta G."/>
            <person name="di Bernardo D."/>
            <person name="Down T."/>
            <person name="Engstrom P."/>
            <person name="Fagiolini M."/>
            <person name="Faulkner G."/>
            <person name="Fletcher C.F."/>
            <person name="Fukushima T."/>
            <person name="Furuno M."/>
            <person name="Futaki S."/>
            <person name="Gariboldi M."/>
            <person name="Georgii-Hemming P."/>
            <person name="Gingeras T.R."/>
            <person name="Gojobori T."/>
            <person name="Green R.E."/>
            <person name="Gustincich S."/>
            <person name="Harbers M."/>
            <person name="Hayashi Y."/>
            <person name="Hensch T.K."/>
            <person name="Hirokawa N."/>
            <person name="Hill D."/>
            <person name="Huminiecki L."/>
            <person name="Iacono M."/>
            <person name="Ikeo K."/>
            <person name="Iwama A."/>
            <person name="Ishikawa T."/>
            <person name="Jakt M."/>
            <person name="Kanapin A."/>
            <person name="Katoh M."/>
            <person name="Kawasawa Y."/>
            <person name="Kelso J."/>
            <person name="Kitamura H."/>
            <person name="Kitano H."/>
            <person name="Kollias G."/>
            <person name="Krishnan S.P."/>
            <person name="Kruger A."/>
            <person name="Kummerfeld S.K."/>
            <person name="Kurochkin I.V."/>
            <person name="Lareau L.F."/>
            <person name="Lazarevic D."/>
            <person name="Lipovich L."/>
            <person name="Liu J."/>
            <person name="Liuni S."/>
            <person name="McWilliam S."/>
            <person name="Madan Babu M."/>
            <person name="Madera M."/>
            <person name="Marchionni L."/>
            <person name="Matsuda H."/>
            <person name="Matsuzawa S."/>
            <person name="Miki H."/>
            <person name="Mignone F."/>
            <person name="Miyake S."/>
            <person name="Morris K."/>
            <person name="Mottagui-Tabar S."/>
            <person name="Mulder N."/>
            <person name="Nakano N."/>
            <person name="Nakauchi H."/>
            <person name="Ng P."/>
            <person name="Nilsson R."/>
            <person name="Nishiguchi S."/>
            <person name="Nishikawa S."/>
            <person name="Nori F."/>
            <person name="Ohara O."/>
            <person name="Okazaki Y."/>
            <person name="Orlando V."/>
            <person name="Pang K.C."/>
            <person name="Pavan W.J."/>
            <person name="Pavesi G."/>
            <person name="Pesole G."/>
            <person name="Petrovsky N."/>
            <person name="Piazza S."/>
            <person name="Reed J."/>
            <person name="Reid J.F."/>
            <person name="Ring B.Z."/>
            <person name="Ringwald M."/>
            <person name="Rost B."/>
            <person name="Ruan Y."/>
            <person name="Salzberg S.L."/>
            <person name="Sandelin A."/>
            <person name="Schneider C."/>
            <person name="Schoenbach C."/>
            <person name="Sekiguchi K."/>
            <person name="Semple C.A."/>
            <person name="Seno S."/>
            <person name="Sessa L."/>
            <person name="Sheng Y."/>
            <person name="Shibata Y."/>
            <person name="Shimada H."/>
            <person name="Shimada K."/>
            <person name="Silva D."/>
            <person name="Sinclair B."/>
            <person name="Sperling S."/>
            <person name="Stupka E."/>
            <person name="Sugiura K."/>
            <person name="Sultana R."/>
            <person name="Takenaka Y."/>
            <person name="Taki K."/>
            <person name="Tammoja K."/>
            <person name="Tan S.L."/>
            <person name="Tang S."/>
            <person name="Taylor M.S."/>
            <person name="Tegner J."/>
            <person name="Teichmann S.A."/>
            <person name="Ueda H.R."/>
            <person name="van Nimwegen E."/>
            <person name="Verardo R."/>
            <person name="Wei C.L."/>
            <person name="Yagi K."/>
            <person name="Yamanishi H."/>
            <person name="Zabarovsky E."/>
            <person name="Zhu S."/>
            <person name="Zimmer A."/>
            <person name="Hide W."/>
            <person name="Bult C."/>
            <person name="Grimmond S.M."/>
            <person name="Teasdale R.D."/>
            <person name="Liu E.T."/>
            <person name="Brusic V."/>
            <person name="Quackenbush J."/>
            <person name="Wahlestedt C."/>
            <person name="Mattick J.S."/>
            <person name="Hume D.A."/>
            <person name="Kai C."/>
            <person name="Sasaki D."/>
            <person name="Tomaru Y."/>
            <person name="Fukuda S."/>
            <person name="Kanamori-Katayama M."/>
            <person name="Suzuki M."/>
            <person name="Aoki J."/>
            <person name="Arakawa T."/>
            <person name="Iida J."/>
            <person name="Imamura K."/>
            <person name="Itoh M."/>
            <person name="Kato T."/>
            <person name="Kawaji H."/>
            <person name="Kawagashira N."/>
            <person name="Kawashima T."/>
            <person name="Kojima M."/>
            <person name="Kondo S."/>
            <person name="Konno H."/>
            <person name="Nakano K."/>
            <person name="Ninomiya N."/>
            <person name="Nishio T."/>
            <person name="Okada M."/>
            <person name="Plessy C."/>
            <person name="Shibata K."/>
            <person name="Shiraki T."/>
            <person name="Suzuki S."/>
            <person name="Tagami M."/>
            <person name="Waki K."/>
            <person name="Watahiki A."/>
            <person name="Okamura-Oho Y."/>
            <person name="Suzuki H."/>
            <person name="Kawai J."/>
            <person name="Hayashizaki Y."/>
        </authorList>
    </citation>
    <scope>NUCLEOTIDE SEQUENCE [LARGE SCALE MRNA] OF 341-550 (ISOFORM 1)</scope>
    <source>
        <strain>C57BL/6J</strain>
        <tissue>Embryo</tissue>
    </source>
</reference>
<reference key="4">
    <citation type="journal article" date="2012" name="J. Biol. Chem.">
        <title>Role of glutamate decarboxylase-like protein 1 (GADL1) in taurine biosynthesis.</title>
        <authorList>
            <person name="Liu P."/>
            <person name="Ge X."/>
            <person name="Ding H."/>
            <person name="Jiang H."/>
            <person name="Christensen B.M."/>
            <person name="Li J."/>
        </authorList>
    </citation>
    <scope>TISSUE SPECIFICITY</scope>
</reference>
<reference key="5">
    <citation type="journal article" date="2015" name="Neurochem. Int.">
        <title>Mammalian CSAD and GADL1 have distinct biochemical properties and patterns of brain expression.</title>
        <authorList>
            <person name="Winge I."/>
            <person name="Teigen K."/>
            <person name="Fossbakk A."/>
            <person name="Mahootchi E."/>
            <person name="Kleppe R."/>
            <person name="Skoeldberg F."/>
            <person name="Kaempe O."/>
            <person name="Haavik J."/>
        </authorList>
    </citation>
    <scope>FUNCTION</scope>
    <scope>CATALYTIC ACTIVITY</scope>
    <scope>ACTIVITY REGULATION</scope>
    <scope>BIOPHYSICOCHEMICAL PROPERTIES</scope>
    <scope>SUBSTRATE SPECIFICITY</scope>
    <scope>SUBUNIT</scope>
    <scope>TISSUE SPECIFICITY</scope>
    <scope>DEVELOPMENTAL STAGE</scope>
</reference>
<reference key="6">
    <citation type="journal article" date="2018" name="Acta Crystallogr. F Struct. Biol. Commun.">
        <title>Structure of the mouse acidic amino acid decarboxylase GADL1.</title>
        <authorList>
            <person name="Raasakka A."/>
            <person name="Mahootchi E."/>
            <person name="Winge I."/>
            <person name="Luan W."/>
            <person name="Kursula P."/>
            <person name="Haavik J."/>
        </authorList>
    </citation>
    <scope>X-RAY CRYSTALLOGRAPHY (3.0 ANGSTROMS) OF 49-550</scope>
    <scope>COFACTOR</scope>
    <scope>SUBUNIT</scope>
</reference>